<organism>
    <name type="scientific">Mannheimia succiniciproducens (strain KCTC 0769BP / MBEL55E)</name>
    <dbReference type="NCBI Taxonomy" id="221988"/>
    <lineage>
        <taxon>Bacteria</taxon>
        <taxon>Pseudomonadati</taxon>
        <taxon>Pseudomonadota</taxon>
        <taxon>Gammaproteobacteria</taxon>
        <taxon>Pasteurellales</taxon>
        <taxon>Pasteurellaceae</taxon>
        <taxon>Basfia</taxon>
    </lineage>
</organism>
<proteinExistence type="inferred from homology"/>
<feature type="chain" id="PRO_1000064428" description="Der GTPase-activating protein YihI">
    <location>
        <begin position="1"/>
        <end position="194"/>
    </location>
</feature>
<feature type="region of interest" description="Disordered" evidence="2">
    <location>
        <begin position="1"/>
        <end position="87"/>
    </location>
</feature>
<feature type="compositionally biased region" description="Basic and acidic residues" evidence="2">
    <location>
        <begin position="37"/>
        <end position="48"/>
    </location>
</feature>
<dbReference type="EMBL" id="AE016827">
    <property type="protein sequence ID" value="AAU36837.1"/>
    <property type="molecule type" value="Genomic_DNA"/>
</dbReference>
<dbReference type="RefSeq" id="WP_011199412.1">
    <property type="nucleotide sequence ID" value="NC_006300.1"/>
</dbReference>
<dbReference type="SMR" id="Q65W23"/>
<dbReference type="STRING" id="221988.MS0230"/>
<dbReference type="KEGG" id="msu:MS0230"/>
<dbReference type="eggNOG" id="COG3078">
    <property type="taxonomic scope" value="Bacteria"/>
</dbReference>
<dbReference type="HOGENOM" id="CLU_094104_2_0_6"/>
<dbReference type="OrthoDB" id="5677577at2"/>
<dbReference type="Proteomes" id="UP000000607">
    <property type="component" value="Chromosome"/>
</dbReference>
<dbReference type="GO" id="GO:0005096">
    <property type="term" value="F:GTPase activator activity"/>
    <property type="evidence" value="ECO:0007669"/>
    <property type="project" value="UniProtKB-KW"/>
</dbReference>
<dbReference type="GO" id="GO:0042254">
    <property type="term" value="P:ribosome biogenesis"/>
    <property type="evidence" value="ECO:0007669"/>
    <property type="project" value="UniProtKB-KW"/>
</dbReference>
<dbReference type="HAMAP" id="MF_01058">
    <property type="entry name" value="GAP_YihI"/>
    <property type="match status" value="1"/>
</dbReference>
<dbReference type="InterPro" id="IPR007336">
    <property type="entry name" value="YihI"/>
</dbReference>
<dbReference type="NCBIfam" id="NF003560">
    <property type="entry name" value="PRK05244.1-1"/>
    <property type="match status" value="1"/>
</dbReference>
<dbReference type="Pfam" id="PF04220">
    <property type="entry name" value="YihI"/>
    <property type="match status" value="1"/>
</dbReference>
<evidence type="ECO:0000255" key="1">
    <source>
        <dbReference type="HAMAP-Rule" id="MF_01058"/>
    </source>
</evidence>
<evidence type="ECO:0000256" key="2">
    <source>
        <dbReference type="SAM" id="MobiDB-lite"/>
    </source>
</evidence>
<accession>Q65W23</accession>
<protein>
    <recommendedName>
        <fullName evidence="1">Der GTPase-activating protein YihI</fullName>
    </recommendedName>
</protein>
<sequence>MSRQKKSRNIVDVMPQRKSDKSQISPASYARPSKKLTRYELDAKAREDKKKKKHKGLTSGSRHSRSEQHNNQQMQEKRDPRLGSRKKVPLVVEFVNNPEKGQFIQPVQVQPAEEKVKKLDPMLELEQLENNECLNQLLDALDEGKTISAEDQKFVDECLDRIAQLMDELGIEDEEESEDDLLRTFEKIDINQFK</sequence>
<comment type="function">
    <text evidence="1">A GTPase-activating protein (GAP) that modifies Der/EngA GTPase function. May play a role in ribosome biogenesis.</text>
</comment>
<comment type="subunit">
    <text evidence="1">Interacts with Der.</text>
</comment>
<comment type="similarity">
    <text evidence="1">Belongs to the YihI family.</text>
</comment>
<gene>
    <name evidence="1" type="primary">yihI</name>
    <name type="ordered locus">MS0230</name>
</gene>
<reference key="1">
    <citation type="journal article" date="2004" name="Nat. Biotechnol.">
        <title>The genome sequence of the capnophilic rumen bacterium Mannheimia succiniciproducens.</title>
        <authorList>
            <person name="Hong S.H."/>
            <person name="Kim J.S."/>
            <person name="Lee S.Y."/>
            <person name="In Y.H."/>
            <person name="Choi S.S."/>
            <person name="Rih J.-K."/>
            <person name="Kim C.H."/>
            <person name="Jeong H."/>
            <person name="Hur C.G."/>
            <person name="Kim J.J."/>
        </authorList>
    </citation>
    <scope>NUCLEOTIDE SEQUENCE [LARGE SCALE GENOMIC DNA]</scope>
    <source>
        <strain>KCTC 0769BP / MBEL55E</strain>
    </source>
</reference>
<keyword id="KW-0343">GTPase activation</keyword>
<keyword id="KW-0690">Ribosome biogenesis</keyword>
<name>YIHI_MANSM</name>